<keyword id="KW-0204">Cytolysis</keyword>
<keyword id="KW-1015">Disulfide bond</keyword>
<keyword id="KW-0354">Hemolysis</keyword>
<keyword id="KW-0472">Membrane</keyword>
<keyword id="KW-0964">Secreted</keyword>
<keyword id="KW-0732">Signal</keyword>
<keyword id="KW-1052">Target cell membrane</keyword>
<keyword id="KW-1053">Target membrane</keyword>
<keyword id="KW-0800">Toxin</keyword>
<organism>
    <name type="scientific">Naja atra</name>
    <name type="common">Chinese cobra</name>
    <dbReference type="NCBI Taxonomy" id="8656"/>
    <lineage>
        <taxon>Eukaryota</taxon>
        <taxon>Metazoa</taxon>
        <taxon>Chordata</taxon>
        <taxon>Craniata</taxon>
        <taxon>Vertebrata</taxon>
        <taxon>Euteleostomi</taxon>
        <taxon>Lepidosauria</taxon>
        <taxon>Squamata</taxon>
        <taxon>Bifurcata</taxon>
        <taxon>Unidentata</taxon>
        <taxon>Episquamata</taxon>
        <taxon>Toxicofera</taxon>
        <taxon>Serpentes</taxon>
        <taxon>Colubroidea</taxon>
        <taxon>Elapidae</taxon>
        <taxon>Elapinae</taxon>
        <taxon>Naja</taxon>
    </lineage>
</organism>
<protein>
    <recommendedName>
        <fullName evidence="7 9">Cardiotoxin 7''</fullName>
    </recommendedName>
    <alternativeName>
        <fullName evidence="8">Cardiotoxin 7'</fullName>
    </alternativeName>
    <alternativeName>
        <fullName evidence="6">Cardiotoxin VII</fullName>
    </alternativeName>
</protein>
<dbReference type="EMBL" id="U58517">
    <property type="protein sequence ID" value="AAB03219.1"/>
    <property type="molecule type" value="mRNA"/>
</dbReference>
<dbReference type="EMBL" id="U42584">
    <property type="protein sequence ID" value="AAB01540.1"/>
    <property type="molecule type" value="mRNA"/>
</dbReference>
<dbReference type="EMBL" id="U58491">
    <property type="protein sequence ID" value="AAB18387.1"/>
    <property type="molecule type" value="mRNA"/>
</dbReference>
<dbReference type="EMBL" id="U77488">
    <property type="protein sequence ID" value="AAB36928.1"/>
    <property type="molecule type" value="mRNA"/>
</dbReference>
<dbReference type="PIR" id="S70374">
    <property type="entry name" value="S70374"/>
</dbReference>
<dbReference type="BMRB" id="Q91996"/>
<dbReference type="SMR" id="Q91996"/>
<dbReference type="GO" id="GO:0005576">
    <property type="term" value="C:extracellular region"/>
    <property type="evidence" value="ECO:0007669"/>
    <property type="project" value="UniProtKB-SubCell"/>
</dbReference>
<dbReference type="GO" id="GO:0016020">
    <property type="term" value="C:membrane"/>
    <property type="evidence" value="ECO:0007669"/>
    <property type="project" value="UniProtKB-KW"/>
</dbReference>
<dbReference type="GO" id="GO:0044218">
    <property type="term" value="C:other organism cell membrane"/>
    <property type="evidence" value="ECO:0007669"/>
    <property type="project" value="UniProtKB-KW"/>
</dbReference>
<dbReference type="GO" id="GO:0090729">
    <property type="term" value="F:toxin activity"/>
    <property type="evidence" value="ECO:0007669"/>
    <property type="project" value="UniProtKB-KW"/>
</dbReference>
<dbReference type="GO" id="GO:0031640">
    <property type="term" value="P:killing of cells of another organism"/>
    <property type="evidence" value="ECO:0007669"/>
    <property type="project" value="UniProtKB-KW"/>
</dbReference>
<dbReference type="CDD" id="cd00206">
    <property type="entry name" value="TFP_snake_toxin"/>
    <property type="match status" value="1"/>
</dbReference>
<dbReference type="FunFam" id="2.10.60.10:FF:000024">
    <property type="entry name" value="Cytotoxin 1"/>
    <property type="match status" value="1"/>
</dbReference>
<dbReference type="Gene3D" id="2.10.60.10">
    <property type="entry name" value="CD59"/>
    <property type="match status" value="1"/>
</dbReference>
<dbReference type="InterPro" id="IPR003572">
    <property type="entry name" value="Cytotoxin_Cobra"/>
</dbReference>
<dbReference type="InterPro" id="IPR003571">
    <property type="entry name" value="Snake_3FTx"/>
</dbReference>
<dbReference type="InterPro" id="IPR045860">
    <property type="entry name" value="Snake_toxin-like_sf"/>
</dbReference>
<dbReference type="InterPro" id="IPR018354">
    <property type="entry name" value="Snake_toxin_con_site"/>
</dbReference>
<dbReference type="InterPro" id="IPR054131">
    <property type="entry name" value="Toxin_cobra-type"/>
</dbReference>
<dbReference type="Pfam" id="PF21947">
    <property type="entry name" value="Toxin_cobra-type"/>
    <property type="match status" value="1"/>
</dbReference>
<dbReference type="PRINTS" id="PR00282">
    <property type="entry name" value="CYTOTOXIN"/>
</dbReference>
<dbReference type="SUPFAM" id="SSF57302">
    <property type="entry name" value="Snake toxin-like"/>
    <property type="match status" value="1"/>
</dbReference>
<dbReference type="PROSITE" id="PS00272">
    <property type="entry name" value="SNAKE_TOXIN"/>
    <property type="match status" value="1"/>
</dbReference>
<name>3SOFP_NAJAT</name>
<evidence type="ECO:0000250" key="1"/>
<evidence type="ECO:0000250" key="2">
    <source>
        <dbReference type="UniProtKB" id="P14541"/>
    </source>
</evidence>
<evidence type="ECO:0000250" key="3">
    <source>
        <dbReference type="UniProtKB" id="P60301"/>
    </source>
</evidence>
<evidence type="ECO:0000250" key="4">
    <source>
        <dbReference type="UniProtKB" id="P62375"/>
    </source>
</evidence>
<evidence type="ECO:0000305" key="5"/>
<evidence type="ECO:0000312" key="6">
    <source>
        <dbReference type="EMBL" id="AAB01540.1"/>
    </source>
</evidence>
<evidence type="ECO:0000312" key="7">
    <source>
        <dbReference type="EMBL" id="AAB03219.1"/>
    </source>
</evidence>
<evidence type="ECO:0000312" key="8">
    <source>
        <dbReference type="EMBL" id="AAB18387.1"/>
    </source>
</evidence>
<evidence type="ECO:0000312" key="9">
    <source>
        <dbReference type="EMBL" id="AAB36928.1"/>
    </source>
</evidence>
<accession>Q91996</accession>
<accession>O13172</accession>
<accession>O13229</accession>
<sequence>MKTLLLTLVVVTIVCLDLGYTLKCHNTQLPFIYKTCPEGKNLCFKATLKKFPLKFPVKRGCADNCPKNSALLKYVCCSTDKCN</sequence>
<proteinExistence type="inferred from homology"/>
<comment type="function">
    <text evidence="2">Has low cytotoxic activity.</text>
</comment>
<comment type="subcellular location">
    <subcellularLocation>
        <location evidence="4">Secreted</location>
    </subcellularLocation>
    <subcellularLocation>
        <location evidence="4">Target cell membrane</location>
    </subcellularLocation>
</comment>
<comment type="tissue specificity">
    <text evidence="5">Expressed by the venom gland.</text>
</comment>
<comment type="miscellaneous">
    <text evidence="5">Is classified as a P-type cytotoxin, since a proline residue stands at position 52 (Pro-31 in standard classification).</text>
</comment>
<comment type="similarity">
    <text evidence="5">Belongs to the three-finger toxin family. Short-chain subfamily. Orphan group XV sub-subfamily.</text>
</comment>
<feature type="signal peptide" evidence="1">
    <location>
        <begin position="1"/>
        <end position="21"/>
    </location>
</feature>
<feature type="chain" id="PRO_0000035384" description="Cardiotoxin 7''">
    <location>
        <begin position="22"/>
        <end position="83"/>
    </location>
</feature>
<feature type="disulfide bond" evidence="3">
    <location>
        <begin position="24"/>
        <end position="43"/>
    </location>
</feature>
<feature type="disulfide bond" evidence="3">
    <location>
        <begin position="36"/>
        <end position="61"/>
    </location>
</feature>
<feature type="disulfide bond" evidence="3">
    <location>
        <begin position="65"/>
        <end position="76"/>
    </location>
</feature>
<feature type="disulfide bond" evidence="3">
    <location>
        <begin position="77"/>
        <end position="82"/>
    </location>
</feature>
<reference key="1">
    <citation type="submission" date="1996-11" db="EMBL/GenBank/DDBJ databases">
        <authorList>
            <person name="Chu R.C."/>
            <person name="Yang C.-C."/>
        </authorList>
    </citation>
    <scope>NUCLEOTIDE SEQUENCE [MRNA]</scope>
    <source>
        <tissue>Venom gland</tissue>
    </source>
</reference>